<evidence type="ECO:0000255" key="1">
    <source>
        <dbReference type="HAMAP-Rule" id="MF_01365"/>
    </source>
</evidence>
<evidence type="ECO:0000305" key="2"/>
<name>RL6_BARBK</name>
<protein>
    <recommendedName>
        <fullName evidence="1">Large ribosomal subunit protein uL6</fullName>
    </recommendedName>
    <alternativeName>
        <fullName evidence="2">50S ribosomal protein L6</fullName>
    </alternativeName>
</protein>
<organism>
    <name type="scientific">Bartonella bacilliformis (strain ATCC 35685 / KC583 / Herrer 020/F12,63)</name>
    <dbReference type="NCBI Taxonomy" id="360095"/>
    <lineage>
        <taxon>Bacteria</taxon>
        <taxon>Pseudomonadati</taxon>
        <taxon>Pseudomonadota</taxon>
        <taxon>Alphaproteobacteria</taxon>
        <taxon>Hyphomicrobiales</taxon>
        <taxon>Bartonellaceae</taxon>
        <taxon>Bartonella</taxon>
    </lineage>
</organism>
<feature type="chain" id="PRO_1000055197" description="Large ribosomal subunit protein uL6">
    <location>
        <begin position="1"/>
        <end position="177"/>
    </location>
</feature>
<comment type="function">
    <text evidence="1">This protein binds to the 23S rRNA, and is important in its secondary structure. It is located near the subunit interface in the base of the L7/L12 stalk, and near the tRNA binding site of the peptidyltransferase center.</text>
</comment>
<comment type="subunit">
    <text evidence="1">Part of the 50S ribosomal subunit.</text>
</comment>
<comment type="similarity">
    <text evidence="1">Belongs to the universal ribosomal protein uL6 family.</text>
</comment>
<dbReference type="EMBL" id="CP000524">
    <property type="protein sequence ID" value="ABM45635.1"/>
    <property type="molecule type" value="Genomic_DNA"/>
</dbReference>
<dbReference type="RefSeq" id="WP_005766942.1">
    <property type="nucleotide sequence ID" value="NC_008783.1"/>
</dbReference>
<dbReference type="SMR" id="A1USQ9"/>
<dbReference type="STRING" id="360095.BARBAKC583_0713"/>
<dbReference type="GeneID" id="4684544"/>
<dbReference type="KEGG" id="bbk:BARBAKC583_0713"/>
<dbReference type="PATRIC" id="fig|360095.6.peg.692"/>
<dbReference type="eggNOG" id="COG0097">
    <property type="taxonomic scope" value="Bacteria"/>
</dbReference>
<dbReference type="HOGENOM" id="CLU_065464_1_2_5"/>
<dbReference type="OrthoDB" id="9805007at2"/>
<dbReference type="Proteomes" id="UP000000643">
    <property type="component" value="Chromosome"/>
</dbReference>
<dbReference type="GO" id="GO:0022625">
    <property type="term" value="C:cytosolic large ribosomal subunit"/>
    <property type="evidence" value="ECO:0007669"/>
    <property type="project" value="TreeGrafter"/>
</dbReference>
<dbReference type="GO" id="GO:0019843">
    <property type="term" value="F:rRNA binding"/>
    <property type="evidence" value="ECO:0007669"/>
    <property type="project" value="UniProtKB-UniRule"/>
</dbReference>
<dbReference type="GO" id="GO:0003735">
    <property type="term" value="F:structural constituent of ribosome"/>
    <property type="evidence" value="ECO:0007669"/>
    <property type="project" value="InterPro"/>
</dbReference>
<dbReference type="GO" id="GO:0002181">
    <property type="term" value="P:cytoplasmic translation"/>
    <property type="evidence" value="ECO:0007669"/>
    <property type="project" value="TreeGrafter"/>
</dbReference>
<dbReference type="FunFam" id="3.90.930.12:FF:000001">
    <property type="entry name" value="50S ribosomal protein L6"/>
    <property type="match status" value="1"/>
</dbReference>
<dbReference type="Gene3D" id="3.90.930.12">
    <property type="entry name" value="Ribosomal protein L6, alpha-beta domain"/>
    <property type="match status" value="2"/>
</dbReference>
<dbReference type="HAMAP" id="MF_01365_B">
    <property type="entry name" value="Ribosomal_uL6_B"/>
    <property type="match status" value="1"/>
</dbReference>
<dbReference type="InterPro" id="IPR000702">
    <property type="entry name" value="Ribosomal_uL6-like"/>
</dbReference>
<dbReference type="InterPro" id="IPR036789">
    <property type="entry name" value="Ribosomal_uL6-like_a/b-dom_sf"/>
</dbReference>
<dbReference type="InterPro" id="IPR020040">
    <property type="entry name" value="Ribosomal_uL6_a/b-dom"/>
</dbReference>
<dbReference type="InterPro" id="IPR019906">
    <property type="entry name" value="Ribosomal_uL6_bac-type"/>
</dbReference>
<dbReference type="InterPro" id="IPR002358">
    <property type="entry name" value="Ribosomal_uL6_CS"/>
</dbReference>
<dbReference type="NCBIfam" id="TIGR03654">
    <property type="entry name" value="L6_bact"/>
    <property type="match status" value="1"/>
</dbReference>
<dbReference type="PANTHER" id="PTHR11655">
    <property type="entry name" value="60S/50S RIBOSOMAL PROTEIN L6/L9"/>
    <property type="match status" value="1"/>
</dbReference>
<dbReference type="PANTHER" id="PTHR11655:SF14">
    <property type="entry name" value="LARGE RIBOSOMAL SUBUNIT PROTEIN UL6M"/>
    <property type="match status" value="1"/>
</dbReference>
<dbReference type="Pfam" id="PF00347">
    <property type="entry name" value="Ribosomal_L6"/>
    <property type="match status" value="2"/>
</dbReference>
<dbReference type="PIRSF" id="PIRSF002162">
    <property type="entry name" value="Ribosomal_L6"/>
    <property type="match status" value="1"/>
</dbReference>
<dbReference type="PRINTS" id="PR00059">
    <property type="entry name" value="RIBOSOMALL6"/>
</dbReference>
<dbReference type="SUPFAM" id="SSF56053">
    <property type="entry name" value="Ribosomal protein L6"/>
    <property type="match status" value="2"/>
</dbReference>
<dbReference type="PROSITE" id="PS00525">
    <property type="entry name" value="RIBOSOMAL_L6_1"/>
    <property type="match status" value="1"/>
</dbReference>
<accession>A1USQ9</accession>
<reference key="1">
    <citation type="submission" date="2006-12" db="EMBL/GenBank/DDBJ databases">
        <authorList>
            <person name="Hendrix L."/>
            <person name="Mohamoud Y."/>
            <person name="Radune D."/>
            <person name="Shvartsbeyn A."/>
            <person name="Daugherty S."/>
            <person name="Dodson R."/>
            <person name="Durkin A.S."/>
            <person name="Harkins D."/>
            <person name="Huot H."/>
            <person name="Kothari S.P."/>
            <person name="Madupu R."/>
            <person name="Li J."/>
            <person name="Nelson W.C."/>
            <person name="Shrivastava S."/>
            <person name="Giglio M.G."/>
            <person name="Haft D."/>
            <person name="Selengut J."/>
            <person name="Fraser-Ligget C."/>
            <person name="Seshadri R."/>
        </authorList>
    </citation>
    <scope>NUCLEOTIDE SEQUENCE [LARGE SCALE GENOMIC DNA]</scope>
    <source>
        <strain>ATCC 35685 / KC583 / Herrer 020/F12,63</strain>
    </source>
</reference>
<sequence length="177" mass="19293">MSRIGKKPIPVPSGVTASIEGQLIKAKGPKGELSYIVNDEVLVKLEDNIVSVTPRDQSKDARSKWGMSHSMIRNIFCGVKDGFEKKLEISGVGYRAALQGKNIQLSLGFSHDVVYKVPSDVSVAVPKPTEIVVSGIDKQKVGQIAAEIRGYRGPEPYKGKGIKYVDESLVRKEGKKK</sequence>
<keyword id="KW-0687">Ribonucleoprotein</keyword>
<keyword id="KW-0689">Ribosomal protein</keyword>
<keyword id="KW-0694">RNA-binding</keyword>
<keyword id="KW-0699">rRNA-binding</keyword>
<proteinExistence type="inferred from homology"/>
<gene>
    <name evidence="1" type="primary">rplF</name>
    <name type="ordered locus">BARBAKC583_0713</name>
</gene>